<sequence>MSRTPLDTVEHAAATPDVELPWAELGLKKDEYERVVEILGRRPTGAELAMYSVMWSEHCSYKSSKVHLRQFGEKAPQSDALLVGIGENAGVVDVGQGYAVTFKVESHNHPSYVEPYQGAATGVGGIVRDIIAMGARPVAVVDPLRFGAADHPDTKRVLPGVVAGIGGYGNCLGLPNIGGEVVFDACYQGNPLVNAGAIGVMRHEDIHLAKASGAGNKVILYGARTGGDGIGGASILASETFDDAKPSKRPAVQVGDPFQEKLLIECTLEAFAEKLVVGIQDLGAAGLSCATSELASNGSGGMRVTLDDVPLRDSTLSPEEILMSESQERMCAVVEPEKVDRFLAICEKWDVIATVIGEVTDGDRLEIYWHGGKIVDVDPRTVAHDGPVYERPYARPEWQDALQADDANKLPRPSSSEELRDQVLKLVASPNQASKSWITSQYDHFVQGNTVLAQPEDSGMIRIDAESGLGVAIATDGNGRYAKLDPYAGAQLALSEAYRNVATTGAKPLAVSDCLNFGSPEDPAVMWQFAEAIRGLADACQQLGTPVTGGNVSLYNQTGEVAIHPTPVVAVLGVIDDVARRTPVAFQEEGQLLYLLGDTREEFGGSAWSQVVHDHLGGLPPQVDLERERLLGEILISASRDGMIDAAHDLSDGGLIQAVVESALLGGKGARLVVPDGLDAFTFLFSESAGRAVVAVPRSEELRFNDMCGARGLPVTRIGVVDGDSVEVQGEFTLPLAELRKAHEETIPALLA</sequence>
<protein>
    <recommendedName>
        <fullName evidence="1">Phosphoribosylformylglycinamidine synthase subunit PurL</fullName>
        <shortName evidence="1">FGAM synthase</shortName>
        <ecNumber evidence="1">6.3.5.3</ecNumber>
    </recommendedName>
    <alternativeName>
        <fullName evidence="1">Formylglycinamide ribonucleotide amidotransferase subunit II</fullName>
        <shortName evidence="1">FGAR amidotransferase II</shortName>
        <shortName evidence="1">FGAR-AT II</shortName>
    </alternativeName>
    <alternativeName>
        <fullName evidence="1">Glutamine amidotransferase PurL</fullName>
    </alternativeName>
    <alternativeName>
        <fullName evidence="1">Phosphoribosylformylglycinamidine synthase subunit II</fullName>
    </alternativeName>
</protein>
<name>PURL_STRAW</name>
<proteinExistence type="inferred from homology"/>
<gene>
    <name evidence="1" type="primary">purL</name>
    <name type="ordered locus">SAV_4138</name>
</gene>
<dbReference type="EC" id="6.3.5.3" evidence="1"/>
<dbReference type="EMBL" id="BA000030">
    <property type="protein sequence ID" value="BAC71850.1"/>
    <property type="molecule type" value="Genomic_DNA"/>
</dbReference>
<dbReference type="RefSeq" id="WP_010985566.1">
    <property type="nucleotide sequence ID" value="NZ_JZJK01000079.1"/>
</dbReference>
<dbReference type="SMR" id="Q82FW4"/>
<dbReference type="GeneID" id="41541213"/>
<dbReference type="KEGG" id="sma:SAVERM_4138"/>
<dbReference type="eggNOG" id="COG0046">
    <property type="taxonomic scope" value="Bacteria"/>
</dbReference>
<dbReference type="HOGENOM" id="CLU_003100_0_1_11"/>
<dbReference type="OrthoDB" id="9804441at2"/>
<dbReference type="UniPathway" id="UPA00074">
    <property type="reaction ID" value="UER00128"/>
</dbReference>
<dbReference type="Proteomes" id="UP000000428">
    <property type="component" value="Chromosome"/>
</dbReference>
<dbReference type="GO" id="GO:0005737">
    <property type="term" value="C:cytoplasm"/>
    <property type="evidence" value="ECO:0007669"/>
    <property type="project" value="UniProtKB-SubCell"/>
</dbReference>
<dbReference type="GO" id="GO:0005524">
    <property type="term" value="F:ATP binding"/>
    <property type="evidence" value="ECO:0007669"/>
    <property type="project" value="UniProtKB-UniRule"/>
</dbReference>
<dbReference type="GO" id="GO:0000287">
    <property type="term" value="F:magnesium ion binding"/>
    <property type="evidence" value="ECO:0007669"/>
    <property type="project" value="UniProtKB-UniRule"/>
</dbReference>
<dbReference type="GO" id="GO:0004642">
    <property type="term" value="F:phosphoribosylformylglycinamidine synthase activity"/>
    <property type="evidence" value="ECO:0007669"/>
    <property type="project" value="UniProtKB-UniRule"/>
</dbReference>
<dbReference type="GO" id="GO:0006189">
    <property type="term" value="P:'de novo' IMP biosynthetic process"/>
    <property type="evidence" value="ECO:0007669"/>
    <property type="project" value="UniProtKB-UniRule"/>
</dbReference>
<dbReference type="CDD" id="cd02203">
    <property type="entry name" value="PurL_repeat1"/>
    <property type="match status" value="1"/>
</dbReference>
<dbReference type="CDD" id="cd02204">
    <property type="entry name" value="PurL_repeat2"/>
    <property type="match status" value="1"/>
</dbReference>
<dbReference type="FunFam" id="3.30.1330.10:FF:000004">
    <property type="entry name" value="Phosphoribosylformylglycinamidine synthase subunit PurL"/>
    <property type="match status" value="1"/>
</dbReference>
<dbReference type="Gene3D" id="3.90.650.10">
    <property type="entry name" value="PurM-like C-terminal domain"/>
    <property type="match status" value="2"/>
</dbReference>
<dbReference type="Gene3D" id="3.30.1330.10">
    <property type="entry name" value="PurM-like, N-terminal domain"/>
    <property type="match status" value="2"/>
</dbReference>
<dbReference type="HAMAP" id="MF_00420">
    <property type="entry name" value="PurL_2"/>
    <property type="match status" value="1"/>
</dbReference>
<dbReference type="InterPro" id="IPR010074">
    <property type="entry name" value="PRibForGlyAmidine_synth_PurL"/>
</dbReference>
<dbReference type="InterPro" id="IPR041609">
    <property type="entry name" value="PurL_linker"/>
</dbReference>
<dbReference type="InterPro" id="IPR010918">
    <property type="entry name" value="PurM-like_C_dom"/>
</dbReference>
<dbReference type="InterPro" id="IPR036676">
    <property type="entry name" value="PurM-like_C_sf"/>
</dbReference>
<dbReference type="InterPro" id="IPR016188">
    <property type="entry name" value="PurM-like_N"/>
</dbReference>
<dbReference type="InterPro" id="IPR036921">
    <property type="entry name" value="PurM-like_N_sf"/>
</dbReference>
<dbReference type="NCBIfam" id="TIGR01736">
    <property type="entry name" value="FGAM_synth_II"/>
    <property type="match status" value="1"/>
</dbReference>
<dbReference type="NCBIfam" id="NF002290">
    <property type="entry name" value="PRK01213.1"/>
    <property type="match status" value="1"/>
</dbReference>
<dbReference type="PANTHER" id="PTHR43555">
    <property type="entry name" value="PHOSPHORIBOSYLFORMYLGLYCINAMIDINE SYNTHASE SUBUNIT PURL"/>
    <property type="match status" value="1"/>
</dbReference>
<dbReference type="PANTHER" id="PTHR43555:SF1">
    <property type="entry name" value="PHOSPHORIBOSYLFORMYLGLYCINAMIDINE SYNTHASE SUBUNIT PURL"/>
    <property type="match status" value="1"/>
</dbReference>
<dbReference type="Pfam" id="PF00586">
    <property type="entry name" value="AIRS"/>
    <property type="match status" value="2"/>
</dbReference>
<dbReference type="Pfam" id="PF02769">
    <property type="entry name" value="AIRS_C"/>
    <property type="match status" value="2"/>
</dbReference>
<dbReference type="Pfam" id="PF18072">
    <property type="entry name" value="FGAR-AT_linker"/>
    <property type="match status" value="1"/>
</dbReference>
<dbReference type="PIRSF" id="PIRSF001587">
    <property type="entry name" value="FGAM_synthase_II"/>
    <property type="match status" value="1"/>
</dbReference>
<dbReference type="SUPFAM" id="SSF56042">
    <property type="entry name" value="PurM C-terminal domain-like"/>
    <property type="match status" value="2"/>
</dbReference>
<dbReference type="SUPFAM" id="SSF55326">
    <property type="entry name" value="PurM N-terminal domain-like"/>
    <property type="match status" value="2"/>
</dbReference>
<feature type="chain" id="PRO_0000100493" description="Phosphoribosylformylglycinamidine synthase subunit PurL">
    <location>
        <begin position="1"/>
        <end position="752"/>
    </location>
</feature>
<feature type="active site" evidence="1">
    <location>
        <position position="58"/>
    </location>
</feature>
<feature type="active site" description="Proton acceptor" evidence="1">
    <location>
        <position position="107"/>
    </location>
</feature>
<feature type="binding site" evidence="1">
    <location>
        <position position="61"/>
    </location>
    <ligand>
        <name>ATP</name>
        <dbReference type="ChEBI" id="CHEBI:30616"/>
    </ligand>
</feature>
<feature type="binding site" evidence="1">
    <location>
        <position position="103"/>
    </location>
    <ligand>
        <name>ATP</name>
        <dbReference type="ChEBI" id="CHEBI:30616"/>
    </ligand>
</feature>
<feature type="binding site" evidence="1">
    <location>
        <position position="105"/>
    </location>
    <ligand>
        <name>Mg(2+)</name>
        <dbReference type="ChEBI" id="CHEBI:18420"/>
        <label>1</label>
    </ligand>
</feature>
<feature type="binding site" evidence="1">
    <location>
        <begin position="106"/>
        <end position="109"/>
    </location>
    <ligand>
        <name>substrate</name>
    </ligand>
</feature>
<feature type="binding site" evidence="1">
    <location>
        <position position="128"/>
    </location>
    <ligand>
        <name>substrate</name>
    </ligand>
</feature>
<feature type="binding site" evidence="1">
    <location>
        <position position="129"/>
    </location>
    <ligand>
        <name>Mg(2+)</name>
        <dbReference type="ChEBI" id="CHEBI:18420"/>
        <label>2</label>
    </ligand>
</feature>
<feature type="binding site" evidence="1">
    <location>
        <position position="253"/>
    </location>
    <ligand>
        <name>substrate</name>
    </ligand>
</feature>
<feature type="binding site" evidence="1">
    <location>
        <position position="281"/>
    </location>
    <ligand>
        <name>Mg(2+)</name>
        <dbReference type="ChEBI" id="CHEBI:18420"/>
        <label>2</label>
    </ligand>
</feature>
<feature type="binding site" evidence="1">
    <location>
        <begin position="325"/>
        <end position="327"/>
    </location>
    <ligand>
        <name>substrate</name>
    </ligand>
</feature>
<feature type="binding site" evidence="1">
    <location>
        <position position="513"/>
    </location>
    <ligand>
        <name>ATP</name>
        <dbReference type="ChEBI" id="CHEBI:30616"/>
    </ligand>
</feature>
<feature type="binding site" evidence="1">
    <location>
        <position position="550"/>
    </location>
    <ligand>
        <name>ATP</name>
        <dbReference type="ChEBI" id="CHEBI:30616"/>
    </ligand>
</feature>
<feature type="binding site" evidence="1">
    <location>
        <position position="551"/>
    </location>
    <ligand>
        <name>Mg(2+)</name>
        <dbReference type="ChEBI" id="CHEBI:18420"/>
        <label>1</label>
    </ligand>
</feature>
<feature type="binding site" evidence="1">
    <location>
        <position position="553"/>
    </location>
    <ligand>
        <name>substrate</name>
    </ligand>
</feature>
<reference key="1">
    <citation type="journal article" date="2001" name="Proc. Natl. Acad. Sci. U.S.A.">
        <title>Genome sequence of an industrial microorganism Streptomyces avermitilis: deducing the ability of producing secondary metabolites.</title>
        <authorList>
            <person name="Omura S."/>
            <person name="Ikeda H."/>
            <person name="Ishikawa J."/>
            <person name="Hanamoto A."/>
            <person name="Takahashi C."/>
            <person name="Shinose M."/>
            <person name="Takahashi Y."/>
            <person name="Horikawa H."/>
            <person name="Nakazawa H."/>
            <person name="Osonoe T."/>
            <person name="Kikuchi H."/>
            <person name="Shiba T."/>
            <person name="Sakaki Y."/>
            <person name="Hattori M."/>
        </authorList>
    </citation>
    <scope>NUCLEOTIDE SEQUENCE [LARGE SCALE GENOMIC DNA]</scope>
    <source>
        <strain>ATCC 31267 / DSM 46492 / JCM 5070 / NBRC 14893 / NCIMB 12804 / NRRL 8165 / MA-4680</strain>
    </source>
</reference>
<reference key="2">
    <citation type="journal article" date="2003" name="Nat. Biotechnol.">
        <title>Complete genome sequence and comparative analysis of the industrial microorganism Streptomyces avermitilis.</title>
        <authorList>
            <person name="Ikeda H."/>
            <person name="Ishikawa J."/>
            <person name="Hanamoto A."/>
            <person name="Shinose M."/>
            <person name="Kikuchi H."/>
            <person name="Shiba T."/>
            <person name="Sakaki Y."/>
            <person name="Hattori M."/>
            <person name="Omura S."/>
        </authorList>
    </citation>
    <scope>NUCLEOTIDE SEQUENCE [LARGE SCALE GENOMIC DNA]</scope>
    <source>
        <strain>ATCC 31267 / DSM 46492 / JCM 5070 / NBRC 14893 / NCIMB 12804 / NRRL 8165 / MA-4680</strain>
    </source>
</reference>
<comment type="function">
    <text evidence="1">Part of the phosphoribosylformylglycinamidine synthase complex involved in the purines biosynthetic pathway. Catalyzes the ATP-dependent conversion of formylglycinamide ribonucleotide (FGAR) and glutamine to yield formylglycinamidine ribonucleotide (FGAM) and glutamate. The FGAM synthase complex is composed of three subunits. PurQ produces an ammonia molecule by converting glutamine to glutamate. PurL transfers the ammonia molecule to FGAR to form FGAM in an ATP-dependent manner. PurS interacts with PurQ and PurL and is thought to assist in the transfer of the ammonia molecule from PurQ to PurL.</text>
</comment>
<comment type="catalytic activity">
    <reaction evidence="1">
        <text>N(2)-formyl-N(1)-(5-phospho-beta-D-ribosyl)glycinamide + L-glutamine + ATP + H2O = 2-formamido-N(1)-(5-O-phospho-beta-D-ribosyl)acetamidine + L-glutamate + ADP + phosphate + H(+)</text>
        <dbReference type="Rhea" id="RHEA:17129"/>
        <dbReference type="ChEBI" id="CHEBI:15377"/>
        <dbReference type="ChEBI" id="CHEBI:15378"/>
        <dbReference type="ChEBI" id="CHEBI:29985"/>
        <dbReference type="ChEBI" id="CHEBI:30616"/>
        <dbReference type="ChEBI" id="CHEBI:43474"/>
        <dbReference type="ChEBI" id="CHEBI:58359"/>
        <dbReference type="ChEBI" id="CHEBI:147286"/>
        <dbReference type="ChEBI" id="CHEBI:147287"/>
        <dbReference type="ChEBI" id="CHEBI:456216"/>
        <dbReference type="EC" id="6.3.5.3"/>
    </reaction>
</comment>
<comment type="pathway">
    <text evidence="1">Purine metabolism; IMP biosynthesis via de novo pathway; 5-amino-1-(5-phospho-D-ribosyl)imidazole from N(2)-formyl-N(1)-(5-phospho-D-ribosyl)glycinamide: step 1/2.</text>
</comment>
<comment type="subunit">
    <text evidence="1">Monomer. Part of the FGAM synthase complex composed of 1 PurL, 1 PurQ and 2 PurS subunits.</text>
</comment>
<comment type="subcellular location">
    <subcellularLocation>
        <location evidence="1">Cytoplasm</location>
    </subcellularLocation>
</comment>
<comment type="similarity">
    <text evidence="1">Belongs to the FGAMS family.</text>
</comment>
<evidence type="ECO:0000255" key="1">
    <source>
        <dbReference type="HAMAP-Rule" id="MF_00420"/>
    </source>
</evidence>
<keyword id="KW-0067">ATP-binding</keyword>
<keyword id="KW-0963">Cytoplasm</keyword>
<keyword id="KW-0436">Ligase</keyword>
<keyword id="KW-0460">Magnesium</keyword>
<keyword id="KW-0479">Metal-binding</keyword>
<keyword id="KW-0547">Nucleotide-binding</keyword>
<keyword id="KW-0658">Purine biosynthesis</keyword>
<keyword id="KW-1185">Reference proteome</keyword>
<organism>
    <name type="scientific">Streptomyces avermitilis (strain ATCC 31267 / DSM 46492 / JCM 5070 / NBRC 14893 / NCIMB 12804 / NRRL 8165 / MA-4680)</name>
    <dbReference type="NCBI Taxonomy" id="227882"/>
    <lineage>
        <taxon>Bacteria</taxon>
        <taxon>Bacillati</taxon>
        <taxon>Actinomycetota</taxon>
        <taxon>Actinomycetes</taxon>
        <taxon>Kitasatosporales</taxon>
        <taxon>Streptomycetaceae</taxon>
        <taxon>Streptomyces</taxon>
    </lineage>
</organism>
<accession>Q82FW4</accession>